<name>ARGB_BURA4</name>
<sequence>MSEPIDLSQIAPTLKAEILAEALPYIRRYHGKTVVIKYGGNAMTEERLKQGFARDVILLKLVGINPVIVHGGGPQIDQALKKIGKAGTFIQGMRVTDEETMEVVEWVLGGEVQQDIVTLINHFGGHAVGLTGKDGGLIHARKLLMPDRDNPGQYIDIGQVGEVEAINPAVVKALQDDAFIPVISPIGFGEDGLSYNINADLVAGKLATVLNAEKLLMMTNIPGVMDKDGNLLTDLSAREIDALFEDGTISGGMLPKISSALDAAKSGVKSVHIVDGRIEHSVLLEILTEQPFGTMIRSH</sequence>
<proteinExistence type="inferred from homology"/>
<evidence type="ECO:0000255" key="1">
    <source>
        <dbReference type="HAMAP-Rule" id="MF_00082"/>
    </source>
</evidence>
<dbReference type="EC" id="2.7.2.8" evidence="1"/>
<dbReference type="EMBL" id="CP001025">
    <property type="protein sequence ID" value="ACB65481.1"/>
    <property type="molecule type" value="Genomic_DNA"/>
</dbReference>
<dbReference type="RefSeq" id="WP_006754950.1">
    <property type="nucleotide sequence ID" value="NC_010551.1"/>
</dbReference>
<dbReference type="SMR" id="B1YPR7"/>
<dbReference type="GeneID" id="93084661"/>
<dbReference type="KEGG" id="bac:BamMC406_3005"/>
<dbReference type="HOGENOM" id="CLU_053680_0_0_4"/>
<dbReference type="OrthoDB" id="9803155at2"/>
<dbReference type="UniPathway" id="UPA00068">
    <property type="reaction ID" value="UER00107"/>
</dbReference>
<dbReference type="Proteomes" id="UP000001680">
    <property type="component" value="Chromosome 1"/>
</dbReference>
<dbReference type="GO" id="GO:0005737">
    <property type="term" value="C:cytoplasm"/>
    <property type="evidence" value="ECO:0007669"/>
    <property type="project" value="UniProtKB-SubCell"/>
</dbReference>
<dbReference type="GO" id="GO:0003991">
    <property type="term" value="F:acetylglutamate kinase activity"/>
    <property type="evidence" value="ECO:0007669"/>
    <property type="project" value="UniProtKB-UniRule"/>
</dbReference>
<dbReference type="GO" id="GO:0005524">
    <property type="term" value="F:ATP binding"/>
    <property type="evidence" value="ECO:0007669"/>
    <property type="project" value="UniProtKB-UniRule"/>
</dbReference>
<dbReference type="GO" id="GO:0042450">
    <property type="term" value="P:arginine biosynthetic process via ornithine"/>
    <property type="evidence" value="ECO:0007669"/>
    <property type="project" value="UniProtKB-UniRule"/>
</dbReference>
<dbReference type="GO" id="GO:0006526">
    <property type="term" value="P:L-arginine biosynthetic process"/>
    <property type="evidence" value="ECO:0007669"/>
    <property type="project" value="UniProtKB-UniPathway"/>
</dbReference>
<dbReference type="CDD" id="cd04250">
    <property type="entry name" value="AAK_NAGK-C"/>
    <property type="match status" value="1"/>
</dbReference>
<dbReference type="FunFam" id="3.40.1160.10:FF:000004">
    <property type="entry name" value="Acetylglutamate kinase"/>
    <property type="match status" value="1"/>
</dbReference>
<dbReference type="Gene3D" id="3.40.1160.10">
    <property type="entry name" value="Acetylglutamate kinase-like"/>
    <property type="match status" value="1"/>
</dbReference>
<dbReference type="HAMAP" id="MF_00082">
    <property type="entry name" value="ArgB"/>
    <property type="match status" value="1"/>
</dbReference>
<dbReference type="InterPro" id="IPR036393">
    <property type="entry name" value="AceGlu_kinase-like_sf"/>
</dbReference>
<dbReference type="InterPro" id="IPR004662">
    <property type="entry name" value="AcgluKinase_fam"/>
</dbReference>
<dbReference type="InterPro" id="IPR037528">
    <property type="entry name" value="ArgB"/>
</dbReference>
<dbReference type="InterPro" id="IPR001048">
    <property type="entry name" value="Asp/Glu/Uridylate_kinase"/>
</dbReference>
<dbReference type="InterPro" id="IPR041727">
    <property type="entry name" value="NAGK-C"/>
</dbReference>
<dbReference type="NCBIfam" id="TIGR00761">
    <property type="entry name" value="argB"/>
    <property type="match status" value="1"/>
</dbReference>
<dbReference type="PANTHER" id="PTHR23342">
    <property type="entry name" value="N-ACETYLGLUTAMATE SYNTHASE"/>
    <property type="match status" value="1"/>
</dbReference>
<dbReference type="PANTHER" id="PTHR23342:SF0">
    <property type="entry name" value="N-ACETYLGLUTAMATE SYNTHASE, MITOCHONDRIAL"/>
    <property type="match status" value="1"/>
</dbReference>
<dbReference type="Pfam" id="PF00696">
    <property type="entry name" value="AA_kinase"/>
    <property type="match status" value="1"/>
</dbReference>
<dbReference type="PIRSF" id="PIRSF000728">
    <property type="entry name" value="NAGK"/>
    <property type="match status" value="1"/>
</dbReference>
<dbReference type="SUPFAM" id="SSF53633">
    <property type="entry name" value="Carbamate kinase-like"/>
    <property type="match status" value="1"/>
</dbReference>
<keyword id="KW-0028">Amino-acid biosynthesis</keyword>
<keyword id="KW-0055">Arginine biosynthesis</keyword>
<keyword id="KW-0067">ATP-binding</keyword>
<keyword id="KW-0963">Cytoplasm</keyword>
<keyword id="KW-0418">Kinase</keyword>
<keyword id="KW-0547">Nucleotide-binding</keyword>
<keyword id="KW-0808">Transferase</keyword>
<reference key="1">
    <citation type="submission" date="2008-04" db="EMBL/GenBank/DDBJ databases">
        <title>Complete sequence of chromosome 1 of Burkholderia ambifaria MC40-6.</title>
        <authorList>
            <person name="Copeland A."/>
            <person name="Lucas S."/>
            <person name="Lapidus A."/>
            <person name="Glavina del Rio T."/>
            <person name="Dalin E."/>
            <person name="Tice H."/>
            <person name="Pitluck S."/>
            <person name="Chain P."/>
            <person name="Malfatti S."/>
            <person name="Shin M."/>
            <person name="Vergez L."/>
            <person name="Lang D."/>
            <person name="Schmutz J."/>
            <person name="Larimer F."/>
            <person name="Land M."/>
            <person name="Hauser L."/>
            <person name="Kyrpides N."/>
            <person name="Lykidis A."/>
            <person name="Ramette A."/>
            <person name="Konstantinidis K."/>
            <person name="Tiedje J."/>
            <person name="Richardson P."/>
        </authorList>
    </citation>
    <scope>NUCLEOTIDE SEQUENCE [LARGE SCALE GENOMIC DNA]</scope>
    <source>
        <strain>MC40-6</strain>
    </source>
</reference>
<accession>B1YPR7</accession>
<protein>
    <recommendedName>
        <fullName evidence="1">Acetylglutamate kinase</fullName>
        <ecNumber evidence="1">2.7.2.8</ecNumber>
    </recommendedName>
    <alternativeName>
        <fullName evidence="1">N-acetyl-L-glutamate 5-phosphotransferase</fullName>
    </alternativeName>
    <alternativeName>
        <fullName evidence="1">NAG kinase</fullName>
        <shortName evidence="1">NAGK</shortName>
    </alternativeName>
</protein>
<gene>
    <name evidence="1" type="primary">argB</name>
    <name type="ordered locus">BamMC406_3005</name>
</gene>
<comment type="function">
    <text evidence="1">Catalyzes the ATP-dependent phosphorylation of N-acetyl-L-glutamate.</text>
</comment>
<comment type="catalytic activity">
    <reaction evidence="1">
        <text>N-acetyl-L-glutamate + ATP = N-acetyl-L-glutamyl 5-phosphate + ADP</text>
        <dbReference type="Rhea" id="RHEA:14629"/>
        <dbReference type="ChEBI" id="CHEBI:30616"/>
        <dbReference type="ChEBI" id="CHEBI:44337"/>
        <dbReference type="ChEBI" id="CHEBI:57936"/>
        <dbReference type="ChEBI" id="CHEBI:456216"/>
        <dbReference type="EC" id="2.7.2.8"/>
    </reaction>
</comment>
<comment type="pathway">
    <text evidence="1">Amino-acid biosynthesis; L-arginine biosynthesis; N(2)-acetyl-L-ornithine from L-glutamate: step 2/4.</text>
</comment>
<comment type="subcellular location">
    <subcellularLocation>
        <location evidence="1">Cytoplasm</location>
    </subcellularLocation>
</comment>
<comment type="similarity">
    <text evidence="1">Belongs to the acetylglutamate kinase family. ArgB subfamily.</text>
</comment>
<organism>
    <name type="scientific">Burkholderia ambifaria (strain MC40-6)</name>
    <dbReference type="NCBI Taxonomy" id="398577"/>
    <lineage>
        <taxon>Bacteria</taxon>
        <taxon>Pseudomonadati</taxon>
        <taxon>Pseudomonadota</taxon>
        <taxon>Betaproteobacteria</taxon>
        <taxon>Burkholderiales</taxon>
        <taxon>Burkholderiaceae</taxon>
        <taxon>Burkholderia</taxon>
        <taxon>Burkholderia cepacia complex</taxon>
    </lineage>
</organism>
<feature type="chain" id="PRO_1000092849" description="Acetylglutamate kinase">
    <location>
        <begin position="1"/>
        <end position="299"/>
    </location>
</feature>
<feature type="binding site" evidence="1">
    <location>
        <begin position="72"/>
        <end position="73"/>
    </location>
    <ligand>
        <name>substrate</name>
    </ligand>
</feature>
<feature type="binding site" evidence="1">
    <location>
        <position position="94"/>
    </location>
    <ligand>
        <name>substrate</name>
    </ligand>
</feature>
<feature type="binding site" evidence="1">
    <location>
        <position position="196"/>
    </location>
    <ligand>
        <name>substrate</name>
    </ligand>
</feature>
<feature type="site" description="Transition state stabilizer" evidence="1">
    <location>
        <position position="37"/>
    </location>
</feature>
<feature type="site" description="Transition state stabilizer" evidence="1">
    <location>
        <position position="256"/>
    </location>
</feature>